<keyword id="KW-0002">3D-structure</keyword>
<keyword id="KW-0966">Cell projection</keyword>
<keyword id="KW-0969">Cilium</keyword>
<keyword id="KW-0175">Coiled coil</keyword>
<keyword id="KW-0963">Cytoplasm</keyword>
<keyword id="KW-0206">Cytoskeleton</keyword>
<keyword id="KW-0282">Flagellum</keyword>
<keyword id="KW-1185">Reference proteome</keyword>
<sequence>MNSLEAGRVLSVLDEALEGIRLISYVTQDVLDTAEQLRDMLGEDLANALIKHRQLIQSAKSTLNNDQVQASTLELVRLLKKSPSAQRLQVLPYERTYGILQTLQYFEQLRQFAQKRLTTTVEEDSSNREFFEEVRDREERAVAEQEQLKQKLKLQRVELQKAAGTIQVSEDRARGEVSEVQSSTQQSRAAIEGSARAQSEADKSSFQSDLDQVTKELAAARAELARLRQEHKDNEALLRKARKRAEQDVEVQIGEYDADVGAKEEELGKARAEYEEVLRQLQEYNSGWSEMYQERLEYEERERRLADQRFQAALLAVRQNHAARVIQSYWRGFKKAREAAKKKAKKLEKAKAAKKK</sequence>
<organism>
    <name type="scientific">Chlamydomonas reinhardtii</name>
    <name type="common">Chlamydomonas smithii</name>
    <dbReference type="NCBI Taxonomy" id="3055"/>
    <lineage>
        <taxon>Eukaryota</taxon>
        <taxon>Viridiplantae</taxon>
        <taxon>Chlorophyta</taxon>
        <taxon>core chlorophytes</taxon>
        <taxon>Chlorophyceae</taxon>
        <taxon>CS clade</taxon>
        <taxon>Chlamydomonadales</taxon>
        <taxon>Chlamydomonadaceae</taxon>
        <taxon>Chlamydomonas</taxon>
    </lineage>
</organism>
<dbReference type="EMBL" id="DS496131">
    <property type="protein sequence ID" value="EDP01996.1"/>
    <property type="molecule type" value="Genomic_DNA"/>
</dbReference>
<dbReference type="EMBL" id="CM008963">
    <property type="protein sequence ID" value="PNW87558.1"/>
    <property type="molecule type" value="Genomic_DNA"/>
</dbReference>
<dbReference type="RefSeq" id="XP_001694844.1">
    <property type="nucleotide sequence ID" value="XM_001694792.1"/>
</dbReference>
<dbReference type="PDB" id="8GLV">
    <property type="method" value="EM"/>
    <property type="resolution" value="3.10 A"/>
    <property type="chains" value="Ey=1-356"/>
</dbReference>
<dbReference type="PDBsum" id="8GLV"/>
<dbReference type="EMDB" id="EMD-40220"/>
<dbReference type="SMR" id="A8J0N6"/>
<dbReference type="STRING" id="3055.A8J0N6"/>
<dbReference type="PaxDb" id="3055-EDP01996"/>
<dbReference type="EnsemblPlants" id="PNW87558">
    <property type="protein sequence ID" value="PNW87558"/>
    <property type="gene ID" value="CHLRE_02g141350v5"/>
</dbReference>
<dbReference type="GeneID" id="5720431"/>
<dbReference type="Gramene" id="PNW87558">
    <property type="protein sequence ID" value="PNW87558"/>
    <property type="gene ID" value="CHLRE_02g141350v5"/>
</dbReference>
<dbReference type="KEGG" id="cre:CHLRE_02g141350v5"/>
<dbReference type="HOGENOM" id="CLU_779290_0_0_1"/>
<dbReference type="InParanoid" id="A8J0N6"/>
<dbReference type="OMA" id="KWKKHMR"/>
<dbReference type="OrthoDB" id="536093at2759"/>
<dbReference type="Proteomes" id="UP000006906">
    <property type="component" value="Chromosome 2"/>
</dbReference>
<dbReference type="GO" id="GO:0005930">
    <property type="term" value="C:axoneme"/>
    <property type="evidence" value="ECO:0000314"/>
    <property type="project" value="UniProtKB"/>
</dbReference>
<dbReference type="GO" id="GO:0031514">
    <property type="term" value="C:motile cilium"/>
    <property type="evidence" value="ECO:0007669"/>
    <property type="project" value="UniProtKB-KW"/>
</dbReference>
<dbReference type="InterPro" id="IPR042815">
    <property type="entry name" value="DRC10"/>
</dbReference>
<dbReference type="PANTHER" id="PTHR31598:SF1">
    <property type="entry name" value="DYNEIN REGULATORY COMPLEX PROTEIN 10"/>
    <property type="match status" value="1"/>
</dbReference>
<dbReference type="PANTHER" id="PTHR31598">
    <property type="entry name" value="IQ DOMAIN-CONTAINING PROTEIN D"/>
    <property type="match status" value="1"/>
</dbReference>
<protein>
    <recommendedName>
        <fullName evidence="6 7">Dynein regulatory complex protein 10</fullName>
    </recommendedName>
    <alternativeName>
        <fullName>Flagellar associated protein 84</fullName>
    </alternativeName>
</protein>
<proteinExistence type="evidence at protein level"/>
<gene>
    <name evidence="6 7" type="primary">DRC10</name>
    <name type="synonym">FAP84</name>
    <name evidence="8" type="ORF">CHLRE_02g141350v5</name>
    <name type="ORF">CHLREDRAFT_184245</name>
</gene>
<evidence type="ECO:0000255" key="1"/>
<evidence type="ECO:0000255" key="2">
    <source>
        <dbReference type="PROSITE-ProRule" id="PRU00116"/>
    </source>
</evidence>
<evidence type="ECO:0000256" key="3">
    <source>
        <dbReference type="SAM" id="MobiDB-lite"/>
    </source>
</evidence>
<evidence type="ECO:0000269" key="4">
    <source>
    </source>
</evidence>
<evidence type="ECO:0000269" key="5">
    <source>
    </source>
</evidence>
<evidence type="ECO:0000303" key="6">
    <source>
    </source>
</evidence>
<evidence type="ECO:0000303" key="7">
    <source>
    </source>
</evidence>
<evidence type="ECO:0000305" key="8"/>
<feature type="chain" id="PRO_0000444020" description="Dynein regulatory complex protein 10">
    <location>
        <begin position="1"/>
        <end position="356"/>
    </location>
</feature>
<feature type="domain" description="IQ" evidence="2">
    <location>
        <begin position="319"/>
        <end position="348"/>
    </location>
</feature>
<feature type="region of interest" description="Disordered" evidence="3">
    <location>
        <begin position="173"/>
        <end position="209"/>
    </location>
</feature>
<feature type="coiled-coil region" evidence="1">
    <location>
        <begin position="126"/>
        <end position="167"/>
    </location>
</feature>
<feature type="coiled-coil region" evidence="1">
    <location>
        <begin position="197"/>
        <end position="287"/>
    </location>
</feature>
<feature type="compositionally biased region" description="Low complexity" evidence="3">
    <location>
        <begin position="178"/>
        <end position="187"/>
    </location>
</feature>
<comment type="function">
    <text evidence="4 5">Component of the nexin-dynein regulatory complex (N-DRC), a key regulator of ciliary/flagellar motility which maintains the alignment and integrity of the distal axoneme and regulates microtubule sliding in motile axonemes (PubMed:23427265, PubMed:25411337).</text>
</comment>
<comment type="subunit">
    <text evidence="4 5">Component of the nexin-dynein regulatory complex (N-DRC) (PubMed:23427265, PubMed:25411337).</text>
</comment>
<comment type="subcellular location">
    <subcellularLocation>
        <location evidence="4 5">Cytoplasm</location>
        <location evidence="4 5">Cytoskeleton</location>
        <location evidence="4 5">Flagellum axoneme</location>
    </subcellularLocation>
</comment>
<comment type="similarity">
    <text evidence="8">Belongs to the DRC10 family.</text>
</comment>
<reference key="1">
    <citation type="journal article" date="2007" name="Science">
        <title>The Chlamydomonas genome reveals the evolution of key animal and plant functions.</title>
        <authorList>
            <person name="Merchant S.S."/>
            <person name="Prochnik S.E."/>
            <person name="Vallon O."/>
            <person name="Harris E.H."/>
            <person name="Karpowicz S.J."/>
            <person name="Witman G.B."/>
            <person name="Terry A."/>
            <person name="Salamov A."/>
            <person name="Fritz-Laylin L.K."/>
            <person name="Marechal-Drouard L."/>
            <person name="Marshall W.F."/>
            <person name="Qu L.H."/>
            <person name="Nelson D.R."/>
            <person name="Sanderfoot A.A."/>
            <person name="Spalding M.H."/>
            <person name="Kapitonov V.V."/>
            <person name="Ren Q."/>
            <person name="Ferris P."/>
            <person name="Lindquist E."/>
            <person name="Shapiro H."/>
            <person name="Lucas S.M."/>
            <person name="Grimwood J."/>
            <person name="Schmutz J."/>
            <person name="Cardol P."/>
            <person name="Cerutti H."/>
            <person name="Chanfreau G."/>
            <person name="Chen C.L."/>
            <person name="Cognat V."/>
            <person name="Croft M.T."/>
            <person name="Dent R."/>
            <person name="Dutcher S."/>
            <person name="Fernandez E."/>
            <person name="Fukuzawa H."/>
            <person name="Gonzalez-Ballester D."/>
            <person name="Gonzalez-Halphen D."/>
            <person name="Hallmann A."/>
            <person name="Hanikenne M."/>
            <person name="Hippler M."/>
            <person name="Inwood W."/>
            <person name="Jabbari K."/>
            <person name="Kalanon M."/>
            <person name="Kuras R."/>
            <person name="Lefebvre P.A."/>
            <person name="Lemaire S.D."/>
            <person name="Lobanov A.V."/>
            <person name="Lohr M."/>
            <person name="Manuell A."/>
            <person name="Meier I."/>
            <person name="Mets L."/>
            <person name="Mittag M."/>
            <person name="Mittelmeier T."/>
            <person name="Moroney J.V."/>
            <person name="Moseley J."/>
            <person name="Napoli C."/>
            <person name="Nedelcu A.M."/>
            <person name="Niyogi K."/>
            <person name="Novoselov S.V."/>
            <person name="Paulsen I.T."/>
            <person name="Pazour G.J."/>
            <person name="Purton S."/>
            <person name="Ral J.P."/>
            <person name="Riano-Pachon D.M."/>
            <person name="Riekhof W."/>
            <person name="Rymarquis L."/>
            <person name="Schroda M."/>
            <person name="Stern D."/>
            <person name="Umen J."/>
            <person name="Willows R."/>
            <person name="Wilson N."/>
            <person name="Zimmer S.L."/>
            <person name="Allmer J."/>
            <person name="Balk J."/>
            <person name="Bisova K."/>
            <person name="Chen C.J."/>
            <person name="Elias M."/>
            <person name="Gendler K."/>
            <person name="Hauser C."/>
            <person name="Lamb M.R."/>
            <person name="Ledford H."/>
            <person name="Long J.C."/>
            <person name="Minagawa J."/>
            <person name="Page M.D."/>
            <person name="Pan J."/>
            <person name="Pootakham W."/>
            <person name="Roje S."/>
            <person name="Rose A."/>
            <person name="Stahlberg E."/>
            <person name="Terauchi A.M."/>
            <person name="Yang P."/>
            <person name="Ball S."/>
            <person name="Bowler C."/>
            <person name="Dieckmann C.L."/>
            <person name="Gladyshev V.N."/>
            <person name="Green P."/>
            <person name="Jorgensen R."/>
            <person name="Mayfield S."/>
            <person name="Mueller-Roeber B."/>
            <person name="Rajamani S."/>
            <person name="Sayre R.T."/>
            <person name="Brokstein P."/>
            <person name="Dubchak I."/>
            <person name="Goodstein D."/>
            <person name="Hornick L."/>
            <person name="Huang Y.W."/>
            <person name="Jhaveri J."/>
            <person name="Luo Y."/>
            <person name="Martinez D."/>
            <person name="Ngau W.C."/>
            <person name="Otillar B."/>
            <person name="Poliakov A."/>
            <person name="Porter A."/>
            <person name="Szajkowski L."/>
            <person name="Werner G."/>
            <person name="Zhou K."/>
            <person name="Grigoriev I.V."/>
            <person name="Rokhsar D.S."/>
            <person name="Grossman A.R."/>
        </authorList>
    </citation>
    <scope>NUCLEOTIDE SEQUENCE [LARGE SCALE GENOMIC DNA]</scope>
    <source>
        <strain>CC-503</strain>
    </source>
</reference>
<reference key="2">
    <citation type="journal article" date="2013" name="Mol. Biol. Cell">
        <title>The N-DRC forms a conserved biochemical complex that maintains outer doublet alignment and limits microtubule sliding in motile axonemes.</title>
        <authorList>
            <person name="Bower R."/>
            <person name="Tritschler D."/>
            <person name="Vanderwaal K."/>
            <person name="Perrone C.A."/>
            <person name="Mueller J."/>
            <person name="Fox L."/>
            <person name="Sale W.S."/>
            <person name="Porter M.E."/>
        </authorList>
    </citation>
    <scope>FUNCTION</scope>
    <scope>SUBUNIT</scope>
    <scope>SUBCELLULAR LOCATION</scope>
    <scope>IDENTIFICATION BY MASS SPECTROMETRY</scope>
</reference>
<reference key="3">
    <citation type="journal article" date="2015" name="Mol. Biol. Cell">
        <title>Detailed structural and biochemical characterization of the nexin-dynein regulatory complex.</title>
        <authorList>
            <person name="Oda T."/>
            <person name="Yanagisawa H."/>
            <person name="Kikkawa M."/>
        </authorList>
    </citation>
    <scope>FUNCTION</scope>
    <scope>SUBUNIT</scope>
    <scope>SUBCELLULAR LOCATION</scope>
</reference>
<accession>A8J0N6</accession>
<name>DRC10_CHLRE</name>